<organism>
    <name type="scientific">Cynictis penicillata</name>
    <name type="common">Yellow mongoose</name>
    <dbReference type="NCBI Taxonomy" id="41010"/>
    <lineage>
        <taxon>Eukaryota</taxon>
        <taxon>Metazoa</taxon>
        <taxon>Chordata</taxon>
        <taxon>Craniata</taxon>
        <taxon>Vertebrata</taxon>
        <taxon>Euteleostomi</taxon>
        <taxon>Mammalia</taxon>
        <taxon>Eutheria</taxon>
        <taxon>Laurasiatheria</taxon>
        <taxon>Carnivora</taxon>
        <taxon>Feliformia</taxon>
        <taxon>Herpestidae</taxon>
        <taxon>Cynictis</taxon>
    </lineage>
</organism>
<accession>Q85PQ7</accession>
<protein>
    <recommendedName>
        <fullName evidence="1">NADH-ubiquinone oxidoreductase chain 2</fullName>
        <ecNumber evidence="1">7.1.1.2</ecNumber>
    </recommendedName>
    <alternativeName>
        <fullName>NADH dehydrogenase subunit 2</fullName>
    </alternativeName>
</protein>
<name>NU2M_CYNPE</name>
<proteinExistence type="inferred from homology"/>
<evidence type="ECO:0000250" key="1">
    <source>
        <dbReference type="UniProtKB" id="P03891"/>
    </source>
</evidence>
<evidence type="ECO:0000250" key="2">
    <source>
        <dbReference type="UniProtKB" id="P03892"/>
    </source>
</evidence>
<evidence type="ECO:0000255" key="3"/>
<evidence type="ECO:0000305" key="4"/>
<reference key="1">
    <citation type="journal article" date="2003" name="Nature">
        <title>Single origin of Malagasy Carnivora from an African ancestor.</title>
        <authorList>
            <person name="Yoder A.D."/>
            <person name="Burns M.M."/>
            <person name="Zehr S."/>
            <person name="Delefosse T."/>
            <person name="Veron G."/>
            <person name="Goodman S.M."/>
            <person name="Flynn J.J."/>
        </authorList>
    </citation>
    <scope>NUCLEOTIDE SEQUENCE [GENOMIC DNA]</scope>
</reference>
<geneLocation type="mitochondrion"/>
<sequence length="347" mass="38708">MKPPILITIMLTVVSGTMIVLTSSHWLTVWIGFEMNMLAIIPILMKKSNPRAIEASTKYLLTQATASMILMMGVAIDLLYSGQWTMSKTLCPMASAMMTIALAMKLGLAPFHFWVPEVTQGIHMSSGLILLTWQKIAPLSILYQISPTINPNLLLPMAIASVLIGGWGGLNQTQLRKILAYSSIAHMGWMAAITLYNPTMMILNLTIYIIMTSTTFMLFMYNSSTTTLSLSQTWNKAPLITSLILMLMLSLGGLPPLSGFIPKWMIIQELTKNEMIIVPTLLAMTALLNLYFYMRLTYTTTLTMFPSTNNMMMKWKFNNTKKMTLLSPLIVVSTMLLPITPLLSILD</sequence>
<keyword id="KW-0249">Electron transport</keyword>
<keyword id="KW-0472">Membrane</keyword>
<keyword id="KW-0496">Mitochondrion</keyword>
<keyword id="KW-0999">Mitochondrion inner membrane</keyword>
<keyword id="KW-0520">NAD</keyword>
<keyword id="KW-0679">Respiratory chain</keyword>
<keyword id="KW-1278">Translocase</keyword>
<keyword id="KW-0812">Transmembrane</keyword>
<keyword id="KW-1133">Transmembrane helix</keyword>
<keyword id="KW-0813">Transport</keyword>
<keyword id="KW-0830">Ubiquinone</keyword>
<gene>
    <name evidence="1" type="primary">MT-ND2</name>
    <name type="synonym">MTND2</name>
    <name type="synonym">NADH2</name>
    <name type="synonym">ND2</name>
</gene>
<comment type="function">
    <text evidence="1">Core subunit of the mitochondrial membrane respiratory chain NADH dehydrogenase (Complex I) which catalyzes electron transfer from NADH through the respiratory chain, using ubiquinone as an electron acceptor. Essential for the catalytic activity and assembly of complex I.</text>
</comment>
<comment type="catalytic activity">
    <reaction evidence="1">
        <text>a ubiquinone + NADH + 5 H(+)(in) = a ubiquinol + NAD(+) + 4 H(+)(out)</text>
        <dbReference type="Rhea" id="RHEA:29091"/>
        <dbReference type="Rhea" id="RHEA-COMP:9565"/>
        <dbReference type="Rhea" id="RHEA-COMP:9566"/>
        <dbReference type="ChEBI" id="CHEBI:15378"/>
        <dbReference type="ChEBI" id="CHEBI:16389"/>
        <dbReference type="ChEBI" id="CHEBI:17976"/>
        <dbReference type="ChEBI" id="CHEBI:57540"/>
        <dbReference type="ChEBI" id="CHEBI:57945"/>
        <dbReference type="EC" id="7.1.1.2"/>
    </reaction>
</comment>
<comment type="subunit">
    <text evidence="1 2">Core subunit of respiratory chain NADH dehydrogenase (Complex I) which is composed of 45 different subunits. Interacts with TMEM242 (By similarity).</text>
</comment>
<comment type="subcellular location">
    <subcellularLocation>
        <location evidence="2">Mitochondrion inner membrane</location>
        <topology evidence="3">Multi-pass membrane protein</topology>
    </subcellularLocation>
</comment>
<comment type="similarity">
    <text evidence="4">Belongs to the complex I subunit 2 family.</text>
</comment>
<dbReference type="EC" id="7.1.1.2" evidence="1"/>
<dbReference type="EMBL" id="AY170049">
    <property type="protein sequence ID" value="AAN84583.1"/>
    <property type="molecule type" value="Genomic_DNA"/>
</dbReference>
<dbReference type="SMR" id="Q85PQ7"/>
<dbReference type="GO" id="GO:0005743">
    <property type="term" value="C:mitochondrial inner membrane"/>
    <property type="evidence" value="ECO:0000250"/>
    <property type="project" value="UniProtKB"/>
</dbReference>
<dbReference type="GO" id="GO:0008137">
    <property type="term" value="F:NADH dehydrogenase (ubiquinone) activity"/>
    <property type="evidence" value="ECO:0000250"/>
    <property type="project" value="UniProtKB"/>
</dbReference>
<dbReference type="GO" id="GO:0006120">
    <property type="term" value="P:mitochondrial electron transport, NADH to ubiquinone"/>
    <property type="evidence" value="ECO:0000250"/>
    <property type="project" value="UniProtKB"/>
</dbReference>
<dbReference type="GO" id="GO:0032981">
    <property type="term" value="P:mitochondrial respiratory chain complex I assembly"/>
    <property type="evidence" value="ECO:0000250"/>
    <property type="project" value="UniProtKB"/>
</dbReference>
<dbReference type="InterPro" id="IPR050175">
    <property type="entry name" value="Complex_I_Subunit_2"/>
</dbReference>
<dbReference type="InterPro" id="IPR010933">
    <property type="entry name" value="NADH_DH_su2_C"/>
</dbReference>
<dbReference type="InterPro" id="IPR003917">
    <property type="entry name" value="NADH_UbQ_OxRdtase_chain2"/>
</dbReference>
<dbReference type="InterPro" id="IPR001750">
    <property type="entry name" value="ND/Mrp_TM"/>
</dbReference>
<dbReference type="PANTHER" id="PTHR46552">
    <property type="entry name" value="NADH-UBIQUINONE OXIDOREDUCTASE CHAIN 2"/>
    <property type="match status" value="1"/>
</dbReference>
<dbReference type="PANTHER" id="PTHR46552:SF1">
    <property type="entry name" value="NADH-UBIQUINONE OXIDOREDUCTASE CHAIN 2"/>
    <property type="match status" value="1"/>
</dbReference>
<dbReference type="Pfam" id="PF06444">
    <property type="entry name" value="NADH_dehy_S2_C"/>
    <property type="match status" value="1"/>
</dbReference>
<dbReference type="Pfam" id="PF00361">
    <property type="entry name" value="Proton_antipo_M"/>
    <property type="match status" value="1"/>
</dbReference>
<dbReference type="PRINTS" id="PR01436">
    <property type="entry name" value="NADHDHGNASE2"/>
</dbReference>
<feature type="chain" id="PRO_0000117575" description="NADH-ubiquinone oxidoreductase chain 2">
    <location>
        <begin position="1"/>
        <end position="347"/>
    </location>
</feature>
<feature type="transmembrane region" description="Helical" evidence="3">
    <location>
        <begin position="3"/>
        <end position="23"/>
    </location>
</feature>
<feature type="transmembrane region" description="Helical" evidence="3">
    <location>
        <begin position="25"/>
        <end position="45"/>
    </location>
</feature>
<feature type="transmembrane region" description="Helical" evidence="3">
    <location>
        <begin position="59"/>
        <end position="79"/>
    </location>
</feature>
<feature type="transmembrane region" description="Helical" evidence="3">
    <location>
        <begin position="96"/>
        <end position="116"/>
    </location>
</feature>
<feature type="transmembrane region" description="Helical" evidence="3">
    <location>
        <begin position="122"/>
        <end position="142"/>
    </location>
</feature>
<feature type="transmembrane region" description="Helical" evidence="3">
    <location>
        <begin position="149"/>
        <end position="169"/>
    </location>
</feature>
<feature type="transmembrane region" description="Helical" evidence="3">
    <location>
        <begin position="178"/>
        <end position="198"/>
    </location>
</feature>
<feature type="transmembrane region" description="Helical" evidence="3">
    <location>
        <begin position="200"/>
        <end position="220"/>
    </location>
</feature>
<feature type="transmembrane region" description="Helical" evidence="3">
    <location>
        <begin position="237"/>
        <end position="257"/>
    </location>
</feature>
<feature type="transmembrane region" description="Helical" evidence="3">
    <location>
        <begin position="274"/>
        <end position="294"/>
    </location>
</feature>
<feature type="transmembrane region" description="Helical" evidence="3">
    <location>
        <begin position="325"/>
        <end position="345"/>
    </location>
</feature>